<gene>
    <name evidence="1" type="primary">dnaJ2</name>
    <name type="ordered locus">SAV_5570</name>
</gene>
<sequence>MATDYYAVLGVRRDASQDEIKKAFRRLARELHPDVNPDPKTQERFKEINAAYEVLSDPQKKQVYDLGGDPLSQSGGGGAGGFGAGGFGNFSDIMDAFFGTASQRGPRSRTRRGQDAMIRVEIELDEAAFGTTKDIQVETAVVCTTCSGEGAAPGTSAQTCDMCRGRGEVSQVTRSFLGQVMTSRPCPQCQGFGTVVPTPCPECAGDGRVRSRRTLTVKIPAGVDNGTRIQLAGEGEVGPGGGPAGDLYVEIHELPHQTFQRRGDDLHCTVTIPMTAAALGTKVPLETLDGMEEVDIRPGTQSGQSIPLHGRGITHLRGGGRGDLIVHVEVTTPTKMDPEQERLLRELAKLRGEERPTGQFQPGQQGLFSRLKDAFNGR</sequence>
<keyword id="KW-0143">Chaperone</keyword>
<keyword id="KW-0963">Cytoplasm</keyword>
<keyword id="KW-0235">DNA replication</keyword>
<keyword id="KW-0479">Metal-binding</keyword>
<keyword id="KW-1185">Reference proteome</keyword>
<keyword id="KW-0677">Repeat</keyword>
<keyword id="KW-0346">Stress response</keyword>
<keyword id="KW-0862">Zinc</keyword>
<keyword id="KW-0863">Zinc-finger</keyword>
<reference key="1">
    <citation type="journal article" date="2001" name="Proc. Natl. Acad. Sci. U.S.A.">
        <title>Genome sequence of an industrial microorganism Streptomyces avermitilis: deducing the ability of producing secondary metabolites.</title>
        <authorList>
            <person name="Omura S."/>
            <person name="Ikeda H."/>
            <person name="Ishikawa J."/>
            <person name="Hanamoto A."/>
            <person name="Takahashi C."/>
            <person name="Shinose M."/>
            <person name="Takahashi Y."/>
            <person name="Horikawa H."/>
            <person name="Nakazawa H."/>
            <person name="Osonoe T."/>
            <person name="Kikuchi H."/>
            <person name="Shiba T."/>
            <person name="Sakaki Y."/>
            <person name="Hattori M."/>
        </authorList>
    </citation>
    <scope>NUCLEOTIDE SEQUENCE [LARGE SCALE GENOMIC DNA]</scope>
    <source>
        <strain>ATCC 31267 / DSM 46492 / JCM 5070 / NBRC 14893 / NCIMB 12804 / NRRL 8165 / MA-4680</strain>
    </source>
</reference>
<reference key="2">
    <citation type="journal article" date="2003" name="Nat. Biotechnol.">
        <title>Complete genome sequence and comparative analysis of the industrial microorganism Streptomyces avermitilis.</title>
        <authorList>
            <person name="Ikeda H."/>
            <person name="Ishikawa J."/>
            <person name="Hanamoto A."/>
            <person name="Shinose M."/>
            <person name="Kikuchi H."/>
            <person name="Shiba T."/>
            <person name="Sakaki Y."/>
            <person name="Hattori M."/>
            <person name="Omura S."/>
        </authorList>
    </citation>
    <scope>NUCLEOTIDE SEQUENCE [LARGE SCALE GENOMIC DNA]</scope>
    <source>
        <strain>ATCC 31267 / DSM 46492 / JCM 5070 / NBRC 14893 / NCIMB 12804 / NRRL 8165 / MA-4680</strain>
    </source>
</reference>
<organism>
    <name type="scientific">Streptomyces avermitilis (strain ATCC 31267 / DSM 46492 / JCM 5070 / NBRC 14893 / NCIMB 12804 / NRRL 8165 / MA-4680)</name>
    <dbReference type="NCBI Taxonomy" id="227882"/>
    <lineage>
        <taxon>Bacteria</taxon>
        <taxon>Bacillati</taxon>
        <taxon>Actinomycetota</taxon>
        <taxon>Actinomycetes</taxon>
        <taxon>Kitasatosporales</taxon>
        <taxon>Streptomycetaceae</taxon>
        <taxon>Streptomyces</taxon>
    </lineage>
</organism>
<protein>
    <recommendedName>
        <fullName evidence="1">Chaperone protein DnaJ 2</fullName>
    </recommendedName>
</protein>
<feature type="chain" id="PRO_0000070897" description="Chaperone protein DnaJ 2">
    <location>
        <begin position="1"/>
        <end position="378"/>
    </location>
</feature>
<feature type="domain" description="J" evidence="1">
    <location>
        <begin position="4"/>
        <end position="68"/>
    </location>
</feature>
<feature type="repeat" description="CXXCXGXG motif">
    <location>
        <begin position="143"/>
        <end position="150"/>
    </location>
</feature>
<feature type="repeat" description="CXXCXGXG motif">
    <location>
        <begin position="160"/>
        <end position="167"/>
    </location>
</feature>
<feature type="repeat" description="CXXCXGXG motif">
    <location>
        <begin position="186"/>
        <end position="193"/>
    </location>
</feature>
<feature type="repeat" description="CXXCXGXG motif">
    <location>
        <begin position="200"/>
        <end position="207"/>
    </location>
</feature>
<feature type="zinc finger region" description="CR-type" evidence="1">
    <location>
        <begin position="130"/>
        <end position="212"/>
    </location>
</feature>
<feature type="region of interest" description="Disordered" evidence="2">
    <location>
        <begin position="351"/>
        <end position="378"/>
    </location>
</feature>
<feature type="compositionally biased region" description="Polar residues" evidence="2">
    <location>
        <begin position="358"/>
        <end position="367"/>
    </location>
</feature>
<feature type="binding site" evidence="1">
    <location>
        <position position="143"/>
    </location>
    <ligand>
        <name>Zn(2+)</name>
        <dbReference type="ChEBI" id="CHEBI:29105"/>
        <label>1</label>
    </ligand>
</feature>
<feature type="binding site" evidence="1">
    <location>
        <position position="146"/>
    </location>
    <ligand>
        <name>Zn(2+)</name>
        <dbReference type="ChEBI" id="CHEBI:29105"/>
        <label>1</label>
    </ligand>
</feature>
<feature type="binding site" evidence="1">
    <location>
        <position position="160"/>
    </location>
    <ligand>
        <name>Zn(2+)</name>
        <dbReference type="ChEBI" id="CHEBI:29105"/>
        <label>2</label>
    </ligand>
</feature>
<feature type="binding site" evidence="1">
    <location>
        <position position="163"/>
    </location>
    <ligand>
        <name>Zn(2+)</name>
        <dbReference type="ChEBI" id="CHEBI:29105"/>
        <label>2</label>
    </ligand>
</feature>
<feature type="binding site" evidence="1">
    <location>
        <position position="186"/>
    </location>
    <ligand>
        <name>Zn(2+)</name>
        <dbReference type="ChEBI" id="CHEBI:29105"/>
        <label>2</label>
    </ligand>
</feature>
<feature type="binding site" evidence="1">
    <location>
        <position position="189"/>
    </location>
    <ligand>
        <name>Zn(2+)</name>
        <dbReference type="ChEBI" id="CHEBI:29105"/>
        <label>2</label>
    </ligand>
</feature>
<feature type="binding site" evidence="1">
    <location>
        <position position="200"/>
    </location>
    <ligand>
        <name>Zn(2+)</name>
        <dbReference type="ChEBI" id="CHEBI:29105"/>
        <label>1</label>
    </ligand>
</feature>
<feature type="binding site" evidence="1">
    <location>
        <position position="203"/>
    </location>
    <ligand>
        <name>Zn(2+)</name>
        <dbReference type="ChEBI" id="CHEBI:29105"/>
        <label>1</label>
    </ligand>
</feature>
<evidence type="ECO:0000255" key="1">
    <source>
        <dbReference type="HAMAP-Rule" id="MF_01152"/>
    </source>
</evidence>
<evidence type="ECO:0000256" key="2">
    <source>
        <dbReference type="SAM" id="MobiDB-lite"/>
    </source>
</evidence>
<dbReference type="EMBL" id="BA000030">
    <property type="protein sequence ID" value="BAC73282.1"/>
    <property type="molecule type" value="Genomic_DNA"/>
</dbReference>
<dbReference type="SMR" id="Q82BY4"/>
<dbReference type="GeneID" id="41542659"/>
<dbReference type="KEGG" id="sma:SAVERM_5570"/>
<dbReference type="eggNOG" id="COG0484">
    <property type="taxonomic scope" value="Bacteria"/>
</dbReference>
<dbReference type="HOGENOM" id="CLU_017633_0_7_11"/>
<dbReference type="OrthoDB" id="9779889at2"/>
<dbReference type="Proteomes" id="UP000000428">
    <property type="component" value="Chromosome"/>
</dbReference>
<dbReference type="GO" id="GO:0005737">
    <property type="term" value="C:cytoplasm"/>
    <property type="evidence" value="ECO:0007669"/>
    <property type="project" value="UniProtKB-SubCell"/>
</dbReference>
<dbReference type="GO" id="GO:0005524">
    <property type="term" value="F:ATP binding"/>
    <property type="evidence" value="ECO:0007669"/>
    <property type="project" value="InterPro"/>
</dbReference>
<dbReference type="GO" id="GO:0031072">
    <property type="term" value="F:heat shock protein binding"/>
    <property type="evidence" value="ECO:0007669"/>
    <property type="project" value="InterPro"/>
</dbReference>
<dbReference type="GO" id="GO:0051082">
    <property type="term" value="F:unfolded protein binding"/>
    <property type="evidence" value="ECO:0007669"/>
    <property type="project" value="UniProtKB-UniRule"/>
</dbReference>
<dbReference type="GO" id="GO:0008270">
    <property type="term" value="F:zinc ion binding"/>
    <property type="evidence" value="ECO:0007669"/>
    <property type="project" value="UniProtKB-UniRule"/>
</dbReference>
<dbReference type="GO" id="GO:0051085">
    <property type="term" value="P:chaperone cofactor-dependent protein refolding"/>
    <property type="evidence" value="ECO:0007669"/>
    <property type="project" value="TreeGrafter"/>
</dbReference>
<dbReference type="GO" id="GO:0006260">
    <property type="term" value="P:DNA replication"/>
    <property type="evidence" value="ECO:0007669"/>
    <property type="project" value="UniProtKB-KW"/>
</dbReference>
<dbReference type="GO" id="GO:0042026">
    <property type="term" value="P:protein refolding"/>
    <property type="evidence" value="ECO:0007669"/>
    <property type="project" value="TreeGrafter"/>
</dbReference>
<dbReference type="GO" id="GO:0009408">
    <property type="term" value="P:response to heat"/>
    <property type="evidence" value="ECO:0007669"/>
    <property type="project" value="InterPro"/>
</dbReference>
<dbReference type="CDD" id="cd06257">
    <property type="entry name" value="DnaJ"/>
    <property type="match status" value="1"/>
</dbReference>
<dbReference type="CDD" id="cd10747">
    <property type="entry name" value="DnaJ_C"/>
    <property type="match status" value="1"/>
</dbReference>
<dbReference type="CDD" id="cd10719">
    <property type="entry name" value="DnaJ_zf"/>
    <property type="match status" value="1"/>
</dbReference>
<dbReference type="FunFam" id="1.10.287.110:FF:000010">
    <property type="entry name" value="Molecular chaperone DnaJ"/>
    <property type="match status" value="1"/>
</dbReference>
<dbReference type="FunFam" id="2.10.230.10:FF:000002">
    <property type="entry name" value="Molecular chaperone DnaJ"/>
    <property type="match status" value="1"/>
</dbReference>
<dbReference type="FunFam" id="2.60.260.20:FF:000023">
    <property type="entry name" value="Molecular chaperone DnaJ"/>
    <property type="match status" value="1"/>
</dbReference>
<dbReference type="Gene3D" id="1.10.287.110">
    <property type="entry name" value="DnaJ domain"/>
    <property type="match status" value="1"/>
</dbReference>
<dbReference type="Gene3D" id="2.10.230.10">
    <property type="entry name" value="Heat shock protein DnaJ, cysteine-rich domain"/>
    <property type="match status" value="1"/>
</dbReference>
<dbReference type="Gene3D" id="2.60.260.20">
    <property type="entry name" value="Urease metallochaperone UreE, N-terminal domain"/>
    <property type="match status" value="2"/>
</dbReference>
<dbReference type="HAMAP" id="MF_01152">
    <property type="entry name" value="DnaJ"/>
    <property type="match status" value="1"/>
</dbReference>
<dbReference type="InterPro" id="IPR012724">
    <property type="entry name" value="DnaJ"/>
</dbReference>
<dbReference type="InterPro" id="IPR002939">
    <property type="entry name" value="DnaJ_C"/>
</dbReference>
<dbReference type="InterPro" id="IPR001623">
    <property type="entry name" value="DnaJ_domain"/>
</dbReference>
<dbReference type="InterPro" id="IPR018253">
    <property type="entry name" value="DnaJ_domain_CS"/>
</dbReference>
<dbReference type="InterPro" id="IPR008971">
    <property type="entry name" value="HSP40/DnaJ_pept-bd"/>
</dbReference>
<dbReference type="InterPro" id="IPR001305">
    <property type="entry name" value="HSP_DnaJ_Cys-rich_dom"/>
</dbReference>
<dbReference type="InterPro" id="IPR036410">
    <property type="entry name" value="HSP_DnaJ_Cys-rich_dom_sf"/>
</dbReference>
<dbReference type="InterPro" id="IPR036869">
    <property type="entry name" value="J_dom_sf"/>
</dbReference>
<dbReference type="NCBIfam" id="TIGR02349">
    <property type="entry name" value="DnaJ_bact"/>
    <property type="match status" value="1"/>
</dbReference>
<dbReference type="NCBIfam" id="NF008035">
    <property type="entry name" value="PRK10767.1"/>
    <property type="match status" value="1"/>
</dbReference>
<dbReference type="NCBIfam" id="NF010871">
    <property type="entry name" value="PRK14278.1"/>
    <property type="match status" value="1"/>
</dbReference>
<dbReference type="PANTHER" id="PTHR43096:SF48">
    <property type="entry name" value="CHAPERONE PROTEIN DNAJ"/>
    <property type="match status" value="1"/>
</dbReference>
<dbReference type="PANTHER" id="PTHR43096">
    <property type="entry name" value="DNAJ HOMOLOG 1, MITOCHONDRIAL-RELATED"/>
    <property type="match status" value="1"/>
</dbReference>
<dbReference type="Pfam" id="PF00226">
    <property type="entry name" value="DnaJ"/>
    <property type="match status" value="1"/>
</dbReference>
<dbReference type="Pfam" id="PF01556">
    <property type="entry name" value="DnaJ_C"/>
    <property type="match status" value="1"/>
</dbReference>
<dbReference type="Pfam" id="PF00684">
    <property type="entry name" value="DnaJ_CXXCXGXG"/>
    <property type="match status" value="1"/>
</dbReference>
<dbReference type="PRINTS" id="PR00625">
    <property type="entry name" value="JDOMAIN"/>
</dbReference>
<dbReference type="SMART" id="SM00271">
    <property type="entry name" value="DnaJ"/>
    <property type="match status" value="1"/>
</dbReference>
<dbReference type="SUPFAM" id="SSF46565">
    <property type="entry name" value="Chaperone J-domain"/>
    <property type="match status" value="1"/>
</dbReference>
<dbReference type="SUPFAM" id="SSF57938">
    <property type="entry name" value="DnaJ/Hsp40 cysteine-rich domain"/>
    <property type="match status" value="1"/>
</dbReference>
<dbReference type="SUPFAM" id="SSF49493">
    <property type="entry name" value="HSP40/DnaJ peptide-binding domain"/>
    <property type="match status" value="2"/>
</dbReference>
<dbReference type="PROSITE" id="PS00636">
    <property type="entry name" value="DNAJ_1"/>
    <property type="match status" value="1"/>
</dbReference>
<dbReference type="PROSITE" id="PS50076">
    <property type="entry name" value="DNAJ_2"/>
    <property type="match status" value="1"/>
</dbReference>
<dbReference type="PROSITE" id="PS51188">
    <property type="entry name" value="ZF_CR"/>
    <property type="match status" value="1"/>
</dbReference>
<comment type="function">
    <text evidence="1">Participates actively in the response to hyperosmotic and heat shock by preventing the aggregation of stress-denatured proteins and by disaggregating proteins, also in an autonomous, DnaK-independent fashion. Unfolded proteins bind initially to DnaJ; upon interaction with the DnaJ-bound protein, DnaK hydrolyzes its bound ATP, resulting in the formation of a stable complex. GrpE releases ADP from DnaK; ATP binding to DnaK triggers the release of the substrate protein, thus completing the reaction cycle. Several rounds of ATP-dependent interactions between DnaJ, DnaK and GrpE are required for fully efficient folding. Also involved, together with DnaK and GrpE, in the DNA replication of plasmids through activation of initiation proteins.</text>
</comment>
<comment type="cofactor">
    <cofactor evidence="1">
        <name>Zn(2+)</name>
        <dbReference type="ChEBI" id="CHEBI:29105"/>
    </cofactor>
    <text evidence="1">Binds 2 Zn(2+) ions per monomer.</text>
</comment>
<comment type="subunit">
    <text evidence="1">Homodimer.</text>
</comment>
<comment type="subcellular location">
    <subcellularLocation>
        <location evidence="1">Cytoplasm</location>
    </subcellularLocation>
</comment>
<comment type="domain">
    <text evidence="1">The J domain is necessary and sufficient to stimulate DnaK ATPase activity. Zinc center 1 plays an important role in the autonomous, DnaK-independent chaperone activity of DnaJ. Zinc center 2 is essential for interaction with DnaK and for DnaJ activity.</text>
</comment>
<comment type="similarity">
    <text evidence="1">Belongs to the DnaJ family.</text>
</comment>
<accession>Q82BY4</accession>
<proteinExistence type="inferred from homology"/>
<name>DNAJ2_STRAW</name>